<gene>
    <name type="primary">HEK2</name>
    <name type="synonym">KHD1</name>
    <name type="ORF">SCRG_02995</name>
</gene>
<evidence type="ECO:0000250" key="1"/>
<evidence type="ECO:0000250" key="2">
    <source>
        <dbReference type="UniProtKB" id="P38199"/>
    </source>
</evidence>
<evidence type="ECO:0000255" key="3">
    <source>
        <dbReference type="PROSITE-ProRule" id="PRU00117"/>
    </source>
</evidence>
<evidence type="ECO:0000256" key="4">
    <source>
        <dbReference type="SAM" id="MobiDB-lite"/>
    </source>
</evidence>
<evidence type="ECO:0000305" key="5"/>
<name>HEK2_YEAS1</name>
<sequence length="381" mass="41740">MSQFFEAATPVAIPTNNTNGGSSDAGSAATGGAPVVGTTAQPTINHRLLLSLKEAAKIIGTKGSTISRIRAANSVKIGISEKVPGCSDRILSCAGNVINVANAIGDIVDVLNKRNPENEDAAEGEAEEHYYFHFLNHILPAPSKDEIRDLQQLEDIGYVRLIVANSHISSIIGKAGATIKSLINKHGVKIVASKDFLPASDERIIEIQGFPGSITNVLIEISEIILSDVDVRFSTERSYFPHLKKSSGEPTSPSTSSNTRIELKIPELYVGAIIGRGMNRIKNLKTFTKTNIVVERKDDDDKDENFRKFIITSKFPKNVKLAESMLLKNLNTEIEKRENYKRKLEAAEVDATVVTERSDSASFLEEKEEPQKNHDNKEEQS</sequence>
<proteinExistence type="inferred from homology"/>
<dbReference type="EMBL" id="CH408048">
    <property type="protein sequence ID" value="EDV12123.1"/>
    <property type="molecule type" value="Genomic_DNA"/>
</dbReference>
<dbReference type="SMR" id="B3LNH0"/>
<dbReference type="HOGENOM" id="CLU_022670_2_0_1"/>
<dbReference type="OrthoDB" id="41596at4893"/>
<dbReference type="Proteomes" id="UP000008335">
    <property type="component" value="Unassembled WGS sequence"/>
</dbReference>
<dbReference type="GO" id="GO:0000781">
    <property type="term" value="C:chromosome, telomeric region"/>
    <property type="evidence" value="ECO:0007669"/>
    <property type="project" value="UniProtKB-SubCell"/>
</dbReference>
<dbReference type="GO" id="GO:0005634">
    <property type="term" value="C:nucleus"/>
    <property type="evidence" value="ECO:0007669"/>
    <property type="project" value="UniProtKB-SubCell"/>
</dbReference>
<dbReference type="GO" id="GO:0000932">
    <property type="term" value="C:P-body"/>
    <property type="evidence" value="ECO:0007669"/>
    <property type="project" value="UniProtKB-SubCell"/>
</dbReference>
<dbReference type="GO" id="GO:0003723">
    <property type="term" value="F:RNA binding"/>
    <property type="evidence" value="ECO:0007669"/>
    <property type="project" value="UniProtKB-KW"/>
</dbReference>
<dbReference type="GO" id="GO:0006325">
    <property type="term" value="P:chromatin organization"/>
    <property type="evidence" value="ECO:0007669"/>
    <property type="project" value="UniProtKB-KW"/>
</dbReference>
<dbReference type="GO" id="GO:0051028">
    <property type="term" value="P:mRNA transport"/>
    <property type="evidence" value="ECO:0007669"/>
    <property type="project" value="UniProtKB-KW"/>
</dbReference>
<dbReference type="GO" id="GO:0006417">
    <property type="term" value="P:regulation of translation"/>
    <property type="evidence" value="ECO:0007669"/>
    <property type="project" value="UniProtKB-KW"/>
</dbReference>
<dbReference type="CDD" id="cd00105">
    <property type="entry name" value="KH-I"/>
    <property type="match status" value="1"/>
</dbReference>
<dbReference type="CDD" id="cd22456">
    <property type="entry name" value="KH-I_Rnc1_rpt2"/>
    <property type="match status" value="1"/>
</dbReference>
<dbReference type="Gene3D" id="3.30.1370.10">
    <property type="entry name" value="K Homology domain, type 1"/>
    <property type="match status" value="3"/>
</dbReference>
<dbReference type="InterPro" id="IPR004087">
    <property type="entry name" value="KH_dom"/>
</dbReference>
<dbReference type="InterPro" id="IPR004088">
    <property type="entry name" value="KH_dom_type_1"/>
</dbReference>
<dbReference type="InterPro" id="IPR036612">
    <property type="entry name" value="KH_dom_type_1_sf"/>
</dbReference>
<dbReference type="PANTHER" id="PTHR10288">
    <property type="entry name" value="KH DOMAIN CONTAINING RNA BINDING PROTEIN"/>
    <property type="match status" value="1"/>
</dbReference>
<dbReference type="Pfam" id="PF00013">
    <property type="entry name" value="KH_1"/>
    <property type="match status" value="3"/>
</dbReference>
<dbReference type="SMART" id="SM00322">
    <property type="entry name" value="KH"/>
    <property type="match status" value="3"/>
</dbReference>
<dbReference type="SUPFAM" id="SSF54791">
    <property type="entry name" value="Eukaryotic type KH-domain (KH-domain type I)"/>
    <property type="match status" value="3"/>
</dbReference>
<dbReference type="PROSITE" id="PS50084">
    <property type="entry name" value="KH_TYPE_1"/>
    <property type="match status" value="3"/>
</dbReference>
<organism>
    <name type="scientific">Saccharomyces cerevisiae (strain RM11-1a)</name>
    <name type="common">Baker's yeast</name>
    <dbReference type="NCBI Taxonomy" id="285006"/>
    <lineage>
        <taxon>Eukaryota</taxon>
        <taxon>Fungi</taxon>
        <taxon>Dikarya</taxon>
        <taxon>Ascomycota</taxon>
        <taxon>Saccharomycotina</taxon>
        <taxon>Saccharomycetes</taxon>
        <taxon>Saccharomycetales</taxon>
        <taxon>Saccharomycetaceae</taxon>
        <taxon>Saccharomyces</taxon>
    </lineage>
</organism>
<comment type="function">
    <text evidence="1">RNA-binding protein involved in the correct localization of transcripts in the cell. RNA localization is a widespread mechanism for achieving localized protein synthesis. Required for the asymmetric localization to the daughter cell nucleus of the ASH1 transcript, coding for a specific repressor of transcription. Overexpression inhibits translation of the ASH1 transcript. Involved in the stability of transcripts, like the MTL1 mRNA. Involved in structural and functional organization of telomeric chromatin and regulates silencing at the HMR locus (By similarity).</text>
</comment>
<comment type="subunit">
    <text evidence="1">Binds RNA.</text>
</comment>
<comment type="subcellular location">
    <subcellularLocation>
        <location evidence="1">Cytoplasm</location>
    </subcellularLocation>
    <subcellularLocation>
        <location evidence="1">Cytoplasm</location>
        <location evidence="1">P-body</location>
    </subcellularLocation>
    <subcellularLocation>
        <location evidence="1">Nucleus</location>
    </subcellularLocation>
    <subcellularLocation>
        <location evidence="1">Chromosome</location>
        <location evidence="1">Telomere</location>
    </subcellularLocation>
</comment>
<comment type="PTM">
    <text evidence="1">Phosphorylated by the plasma membrane-Anchored casein kinase YCK1. Phosphorylation at its C-terminus reduces its RNA-binding capacity (By similarity).</text>
</comment>
<comment type="similarity">
    <text evidence="5">Belongs to the HEK2 family.</text>
</comment>
<protein>
    <recommendedName>
        <fullName>Heterogeneous nuclear rnp K-like protein 2</fullName>
    </recommendedName>
    <alternativeName>
        <fullName>KH domain-containing protein 1</fullName>
    </alternativeName>
</protein>
<keyword id="KW-0156">Chromatin regulator</keyword>
<keyword id="KW-0158">Chromosome</keyword>
<keyword id="KW-0963">Cytoplasm</keyword>
<keyword id="KW-0509">mRNA transport</keyword>
<keyword id="KW-0539">Nucleus</keyword>
<keyword id="KW-0597">Phosphoprotein</keyword>
<keyword id="KW-0677">Repeat</keyword>
<keyword id="KW-0694">RNA-binding</keyword>
<keyword id="KW-0779">Telomere</keyword>
<keyword id="KW-0810">Translation regulation</keyword>
<keyword id="KW-0813">Transport</keyword>
<accession>B3LNH0</accession>
<reference key="1">
    <citation type="submission" date="2005-03" db="EMBL/GenBank/DDBJ databases">
        <title>Annotation of the Saccharomyces cerevisiae RM11-1a genome.</title>
        <authorList>
            <consortium name="The Broad Institute Genome Sequencing Platform"/>
            <person name="Birren B.W."/>
            <person name="Lander E.S."/>
            <person name="Galagan J.E."/>
            <person name="Nusbaum C."/>
            <person name="Devon K."/>
            <person name="Cuomo C."/>
            <person name="Jaffe D.B."/>
            <person name="Butler J."/>
            <person name="Alvarez P."/>
            <person name="Gnerre S."/>
            <person name="Grabherr M."/>
            <person name="Kleber M."/>
            <person name="Mauceli E.W."/>
            <person name="Brockman W."/>
            <person name="MacCallum I.A."/>
            <person name="Rounsley S."/>
            <person name="Young S.K."/>
            <person name="LaButti K."/>
            <person name="Pushparaj V."/>
            <person name="DeCaprio D."/>
            <person name="Crawford M."/>
            <person name="Koehrsen M."/>
            <person name="Engels R."/>
            <person name="Montgomery P."/>
            <person name="Pearson M."/>
            <person name="Howarth C."/>
            <person name="Larson L."/>
            <person name="Luoma S."/>
            <person name="White J."/>
            <person name="O'Leary S."/>
            <person name="Kodira C.D."/>
            <person name="Zeng Q."/>
            <person name="Yandava C."/>
            <person name="Alvarado L."/>
            <person name="Pratt S."/>
            <person name="Kruglyak L."/>
        </authorList>
    </citation>
    <scope>NUCLEOTIDE SEQUENCE [LARGE SCALE GENOMIC DNA]</scope>
    <source>
        <strain>RM11-1a</strain>
    </source>
</reference>
<feature type="chain" id="PRO_0000408192" description="Heterogeneous nuclear rnp K-like protein 2">
    <location>
        <begin position="1"/>
        <end position="381"/>
    </location>
</feature>
<feature type="domain" description="KH 1" evidence="3">
    <location>
        <begin position="43"/>
        <end position="107"/>
    </location>
</feature>
<feature type="domain" description="KH 2" evidence="3">
    <location>
        <begin position="156"/>
        <end position="221"/>
    </location>
</feature>
<feature type="domain" description="KH 3" evidence="3">
    <location>
        <begin position="258"/>
        <end position="326"/>
    </location>
</feature>
<feature type="region of interest" description="Disordered" evidence="4">
    <location>
        <begin position="1"/>
        <end position="34"/>
    </location>
</feature>
<feature type="region of interest" description="Disordered" evidence="4">
    <location>
        <begin position="357"/>
        <end position="381"/>
    </location>
</feature>
<feature type="compositionally biased region" description="Low complexity" evidence="4">
    <location>
        <begin position="15"/>
        <end position="33"/>
    </location>
</feature>
<feature type="compositionally biased region" description="Basic and acidic residues" evidence="4">
    <location>
        <begin position="369"/>
        <end position="381"/>
    </location>
</feature>
<feature type="modified residue" description="Phosphoserine" evidence="2">
    <location>
        <position position="358"/>
    </location>
</feature>
<feature type="modified residue" description="Phosphoserine" evidence="2">
    <location>
        <position position="360"/>
    </location>
</feature>
<feature type="modified residue" description="Phosphoserine" evidence="2">
    <location>
        <position position="362"/>
    </location>
</feature>